<reference key="1">
    <citation type="submission" date="2008-02" db="EMBL/GenBank/DDBJ databases">
        <title>Complete sequence of Escherichia coli C str. ATCC 8739.</title>
        <authorList>
            <person name="Copeland A."/>
            <person name="Lucas S."/>
            <person name="Lapidus A."/>
            <person name="Glavina del Rio T."/>
            <person name="Dalin E."/>
            <person name="Tice H."/>
            <person name="Bruce D."/>
            <person name="Goodwin L."/>
            <person name="Pitluck S."/>
            <person name="Kiss H."/>
            <person name="Brettin T."/>
            <person name="Detter J.C."/>
            <person name="Han C."/>
            <person name="Kuske C.R."/>
            <person name="Schmutz J."/>
            <person name="Larimer F."/>
            <person name="Land M."/>
            <person name="Hauser L."/>
            <person name="Kyrpides N."/>
            <person name="Mikhailova N."/>
            <person name="Ingram L."/>
            <person name="Richardson P."/>
        </authorList>
    </citation>
    <scope>NUCLEOTIDE SEQUENCE [LARGE SCALE GENOMIC DNA]</scope>
    <source>
        <strain>ATCC 8739 / DSM 1576 / NBRC 3972 / NCIMB 8545 / WDCM 00012 / Crooks</strain>
    </source>
</reference>
<evidence type="ECO:0000255" key="1">
    <source>
        <dbReference type="HAMAP-Rule" id="MF_01606"/>
    </source>
</evidence>
<dbReference type="EMBL" id="CP000946">
    <property type="protein sequence ID" value="ACA79402.1"/>
    <property type="molecule type" value="Genomic_DNA"/>
</dbReference>
<dbReference type="RefSeq" id="WP_000331456.1">
    <property type="nucleotide sequence ID" value="NZ_MTFT01000012.1"/>
</dbReference>
<dbReference type="SMR" id="B1ISZ1"/>
<dbReference type="GeneID" id="93777612"/>
<dbReference type="KEGG" id="ecl:EcolC_3797"/>
<dbReference type="HOGENOM" id="CLU_076075_2_0_6"/>
<dbReference type="GO" id="GO:0005737">
    <property type="term" value="C:cytoplasm"/>
    <property type="evidence" value="ECO:0007669"/>
    <property type="project" value="UniProtKB-SubCell"/>
</dbReference>
<dbReference type="GO" id="GO:0046872">
    <property type="term" value="F:metal ion binding"/>
    <property type="evidence" value="ECO:0007669"/>
    <property type="project" value="UniProtKB-KW"/>
</dbReference>
<dbReference type="GO" id="GO:0030091">
    <property type="term" value="P:protein repair"/>
    <property type="evidence" value="ECO:0007669"/>
    <property type="project" value="UniProtKB-UniRule"/>
</dbReference>
<dbReference type="GO" id="GO:0051409">
    <property type="term" value="P:response to nitrosative stress"/>
    <property type="evidence" value="ECO:0007669"/>
    <property type="project" value="UniProtKB-UniRule"/>
</dbReference>
<dbReference type="GO" id="GO:0006979">
    <property type="term" value="P:response to oxidative stress"/>
    <property type="evidence" value="ECO:0007669"/>
    <property type="project" value="UniProtKB-UniRule"/>
</dbReference>
<dbReference type="CDD" id="cd12108">
    <property type="entry name" value="Hr-like"/>
    <property type="match status" value="1"/>
</dbReference>
<dbReference type="FunFam" id="1.20.120.520:FF:000001">
    <property type="entry name" value="Iron-sulfur cluster repair protein YtfE"/>
    <property type="match status" value="1"/>
</dbReference>
<dbReference type="Gene3D" id="1.20.120.520">
    <property type="entry name" value="nmb1532 protein domain like"/>
    <property type="match status" value="1"/>
</dbReference>
<dbReference type="HAMAP" id="MF_01606">
    <property type="entry name" value="RIC_YtfE"/>
    <property type="match status" value="1"/>
</dbReference>
<dbReference type="InterPro" id="IPR023742">
    <property type="entry name" value="FeS-repair_YftE"/>
</dbReference>
<dbReference type="InterPro" id="IPR012312">
    <property type="entry name" value="Hemerythrin-like"/>
</dbReference>
<dbReference type="InterPro" id="IPR019903">
    <property type="entry name" value="RIC_family"/>
</dbReference>
<dbReference type="NCBIfam" id="TIGR03652">
    <property type="entry name" value="FeS_repair_RIC"/>
    <property type="match status" value="1"/>
</dbReference>
<dbReference type="NCBIfam" id="NF008221">
    <property type="entry name" value="PRK10992.1"/>
    <property type="match status" value="1"/>
</dbReference>
<dbReference type="PANTHER" id="PTHR36438">
    <property type="entry name" value="IRON-SULFUR CLUSTER REPAIR PROTEIN YTFE"/>
    <property type="match status" value="1"/>
</dbReference>
<dbReference type="PANTHER" id="PTHR36438:SF1">
    <property type="entry name" value="IRON-SULFUR CLUSTER REPAIR PROTEIN YTFE"/>
    <property type="match status" value="1"/>
</dbReference>
<dbReference type="Pfam" id="PF01814">
    <property type="entry name" value="Hemerythrin"/>
    <property type="match status" value="1"/>
</dbReference>
<dbReference type="Pfam" id="PF04405">
    <property type="entry name" value="ScdA_N"/>
    <property type="match status" value="1"/>
</dbReference>
<organism>
    <name type="scientific">Escherichia coli (strain ATCC 8739 / DSM 1576 / NBRC 3972 / NCIMB 8545 / WDCM 00012 / Crooks)</name>
    <dbReference type="NCBI Taxonomy" id="481805"/>
    <lineage>
        <taxon>Bacteria</taxon>
        <taxon>Pseudomonadati</taxon>
        <taxon>Pseudomonadota</taxon>
        <taxon>Gammaproteobacteria</taxon>
        <taxon>Enterobacterales</taxon>
        <taxon>Enterobacteriaceae</taxon>
        <taxon>Escherichia</taxon>
    </lineage>
</organism>
<feature type="chain" id="PRO_1000088032" description="Iron-sulfur cluster repair protein YtfE">
    <location>
        <begin position="1"/>
        <end position="220"/>
    </location>
</feature>
<protein>
    <recommendedName>
        <fullName evidence="1">Iron-sulfur cluster repair protein YtfE</fullName>
    </recommendedName>
</protein>
<name>YTFE_ECOLC</name>
<gene>
    <name evidence="1" type="primary">ytfE</name>
    <name type="ordered locus">EcolC_3797</name>
</gene>
<sequence>MAYRDQPLGELALSIPRASALFRKYDMDYCCGGKQTLARAAARKELDVEVIEAELAKLAEQPIEKDWRSAPLAEIIDHIIVRYHDRHREQLPELILQATKVERVHADKPSVPKGLTKYLTMLHEELSSHMMKEEQILFPMIKQGMGSQAMGPISVMESEHDEAGELLEVIKHTTNNVTPPPEACTTWKAMYNGINELIDDLMDHISLENNVLFPRALAGE</sequence>
<comment type="function">
    <text evidence="1">Di-iron-containing protein involved in the repair of iron-sulfur clusters damaged by oxidative and nitrosative stress conditions.</text>
</comment>
<comment type="subunit">
    <text evidence="1">Homodimer.</text>
</comment>
<comment type="subcellular location">
    <subcellularLocation>
        <location evidence="1">Cytoplasm</location>
    </subcellularLocation>
</comment>
<comment type="similarity">
    <text evidence="1">Belongs to the RIC family. YtfE subfamily.</text>
</comment>
<keyword id="KW-0963">Cytoplasm</keyword>
<keyword id="KW-0408">Iron</keyword>
<keyword id="KW-0479">Metal-binding</keyword>
<keyword id="KW-0346">Stress response</keyword>
<accession>B1ISZ1</accession>
<proteinExistence type="inferred from homology"/>